<dbReference type="EMBL" id="AY780259">
    <property type="protein sequence ID" value="AAX21073.1"/>
    <property type="status" value="ALT_SEQ"/>
    <property type="molecule type" value="Genomic_DNA"/>
</dbReference>
<dbReference type="EMBL" id="AY780259">
    <property type="protein sequence ID" value="AAX21088.1"/>
    <property type="status" value="ALT_SEQ"/>
    <property type="molecule type" value="Genomic_DNA"/>
</dbReference>
<dbReference type="SMR" id="Q49KX4"/>
<dbReference type="GO" id="GO:0009507">
    <property type="term" value="C:chloroplast"/>
    <property type="evidence" value="ECO:0007669"/>
    <property type="project" value="UniProtKB-SubCell"/>
</dbReference>
<dbReference type="GO" id="GO:0015935">
    <property type="term" value="C:small ribosomal subunit"/>
    <property type="evidence" value="ECO:0007669"/>
    <property type="project" value="InterPro"/>
</dbReference>
<dbReference type="GO" id="GO:0019843">
    <property type="term" value="F:rRNA binding"/>
    <property type="evidence" value="ECO:0007669"/>
    <property type="project" value="UniProtKB-UniRule"/>
</dbReference>
<dbReference type="GO" id="GO:0003735">
    <property type="term" value="F:structural constituent of ribosome"/>
    <property type="evidence" value="ECO:0007669"/>
    <property type="project" value="InterPro"/>
</dbReference>
<dbReference type="GO" id="GO:0006412">
    <property type="term" value="P:translation"/>
    <property type="evidence" value="ECO:0007669"/>
    <property type="project" value="UniProtKB-UniRule"/>
</dbReference>
<dbReference type="CDD" id="cd03368">
    <property type="entry name" value="Ribosomal_S12"/>
    <property type="match status" value="1"/>
</dbReference>
<dbReference type="FunFam" id="2.40.50.140:FF:000008">
    <property type="entry name" value="30S ribosomal protein S12, chloroplastic"/>
    <property type="match status" value="1"/>
</dbReference>
<dbReference type="Gene3D" id="2.40.50.140">
    <property type="entry name" value="Nucleic acid-binding proteins"/>
    <property type="match status" value="1"/>
</dbReference>
<dbReference type="HAMAP" id="MF_00403_B">
    <property type="entry name" value="Ribosomal_uS12_B"/>
    <property type="match status" value="1"/>
</dbReference>
<dbReference type="InterPro" id="IPR012340">
    <property type="entry name" value="NA-bd_OB-fold"/>
</dbReference>
<dbReference type="InterPro" id="IPR006032">
    <property type="entry name" value="Ribosomal_uS12"/>
</dbReference>
<dbReference type="InterPro" id="IPR005679">
    <property type="entry name" value="Ribosomal_uS12_bac"/>
</dbReference>
<dbReference type="NCBIfam" id="TIGR00981">
    <property type="entry name" value="rpsL_bact"/>
    <property type="match status" value="1"/>
</dbReference>
<dbReference type="PANTHER" id="PTHR11652">
    <property type="entry name" value="30S RIBOSOMAL PROTEIN S12 FAMILY MEMBER"/>
    <property type="match status" value="1"/>
</dbReference>
<dbReference type="Pfam" id="PF00164">
    <property type="entry name" value="Ribosom_S12_S23"/>
    <property type="match status" value="1"/>
</dbReference>
<dbReference type="PIRSF" id="PIRSF002133">
    <property type="entry name" value="Ribosomal_S12/S23"/>
    <property type="match status" value="1"/>
</dbReference>
<dbReference type="PRINTS" id="PR01034">
    <property type="entry name" value="RIBOSOMALS12"/>
</dbReference>
<dbReference type="SUPFAM" id="SSF50249">
    <property type="entry name" value="Nucleic acid-binding proteins"/>
    <property type="match status" value="1"/>
</dbReference>
<dbReference type="PROSITE" id="PS00055">
    <property type="entry name" value="RIBOSOMAL_S12"/>
    <property type="match status" value="1"/>
</dbReference>
<accession>Q49KX4</accession>
<gene>
    <name type="primary">rps12-A</name>
</gene>
<gene>
    <name type="primary">rps12-B</name>
</gene>
<geneLocation type="chloroplast"/>
<comment type="function">
    <text evidence="1">With S4 and S5 plays an important role in translational accuracy. Located at the interface of the 30S and 50S subunits (By similarity).</text>
</comment>
<comment type="subunit">
    <text evidence="1">Part of the 30S ribosomal subunit.</text>
</comment>
<comment type="subcellular location">
    <subcellularLocation>
        <location>Plastid</location>
        <location>Chloroplast</location>
    </subcellularLocation>
</comment>
<comment type="similarity">
    <text evidence="3">Belongs to the universal ribosomal protein uS12 family.</text>
</comment>
<comment type="sequence caution" evidence="3">
    <conflict type="erroneous gene model prediction">
        <sequence resource="EMBL-CDS" id="AAX21073"/>
    </conflict>
</comment>
<comment type="sequence caution" evidence="3">
    <conflict type="erroneous gene model prediction">
        <sequence resource="EMBL-CDS" id="AAX21088"/>
    </conflict>
</comment>
<keyword id="KW-0150">Chloroplast</keyword>
<keyword id="KW-0934">Plastid</keyword>
<keyword id="KW-0687">Ribonucleoprotein</keyword>
<keyword id="KW-0689">Ribosomal protein</keyword>
<keyword id="KW-0694">RNA-binding</keyword>
<keyword id="KW-0699">rRNA-binding</keyword>
<sequence length="123" mass="13639">MPTIKQLIRNTRQPIRNVTKSPALGGCPQRRGTCTRVYTITPKKPNSALRKVARVRLTSGFEITAYIPGIGHNSQEHSVVLVRGGRVKDLPGVRYHIVRGTLDAVGVKDRQQGRSQYGVKKPK</sequence>
<reference key="1">
    <citation type="journal article" date="2005" name="DNA Res.">
        <title>Complete nucleotide sequence of the chloroplast genome from the Tasmanian blue gum, Eucalyptus globulus (Myrtaceae).</title>
        <authorList>
            <person name="Steane D.A."/>
        </authorList>
    </citation>
    <scope>NUCLEOTIDE SEQUENCE [LARGE SCALE GENOMIC DNA]</scope>
</reference>
<name>RR12_EUCGG</name>
<protein>
    <recommendedName>
        <fullName evidence="2">Small ribosomal subunit protein uS12cz/uS12cy</fullName>
    </recommendedName>
    <alternativeName>
        <fullName evidence="3">30S ribosomal protein S12, chloroplastic</fullName>
    </alternativeName>
</protein>
<evidence type="ECO:0000250" key="1"/>
<evidence type="ECO:0000255" key="2">
    <source>
        <dbReference type="HAMAP-Rule" id="MF_00403"/>
    </source>
</evidence>
<evidence type="ECO:0000305" key="3"/>
<feature type="chain" id="PRO_0000296068" description="Small ribosomal subunit protein uS12cz/uS12cy">
    <location>
        <begin position="1"/>
        <end position="123"/>
    </location>
</feature>
<organism>
    <name type="scientific">Eucalyptus globulus subsp. globulus</name>
    <name type="common">Tasmanian blue gum</name>
    <dbReference type="NCBI Taxonomy" id="71271"/>
    <lineage>
        <taxon>Eukaryota</taxon>
        <taxon>Viridiplantae</taxon>
        <taxon>Streptophyta</taxon>
        <taxon>Embryophyta</taxon>
        <taxon>Tracheophyta</taxon>
        <taxon>Spermatophyta</taxon>
        <taxon>Magnoliopsida</taxon>
        <taxon>eudicotyledons</taxon>
        <taxon>Gunneridae</taxon>
        <taxon>Pentapetalae</taxon>
        <taxon>rosids</taxon>
        <taxon>malvids</taxon>
        <taxon>Myrtales</taxon>
        <taxon>Myrtaceae</taxon>
        <taxon>Myrtoideae</taxon>
        <taxon>Eucalypteae</taxon>
        <taxon>Eucalyptus</taxon>
    </lineage>
</organism>
<proteinExistence type="inferred from homology"/>